<evidence type="ECO:0000255" key="1">
    <source>
        <dbReference type="HAMAP-Rule" id="MF_01588"/>
    </source>
</evidence>
<reference key="1">
    <citation type="submission" date="2007-11" db="EMBL/GenBank/DDBJ databases">
        <title>Complete sequence of chromosome of Shewanella baltica OS195.</title>
        <authorList>
            <consortium name="US DOE Joint Genome Institute"/>
            <person name="Copeland A."/>
            <person name="Lucas S."/>
            <person name="Lapidus A."/>
            <person name="Barry K."/>
            <person name="Glavina del Rio T."/>
            <person name="Dalin E."/>
            <person name="Tice H."/>
            <person name="Pitluck S."/>
            <person name="Chain P."/>
            <person name="Malfatti S."/>
            <person name="Shin M."/>
            <person name="Vergez L."/>
            <person name="Schmutz J."/>
            <person name="Larimer F."/>
            <person name="Land M."/>
            <person name="Hauser L."/>
            <person name="Kyrpides N."/>
            <person name="Kim E."/>
            <person name="Brettar I."/>
            <person name="Rodrigues J."/>
            <person name="Konstantinidis K."/>
            <person name="Klappenbach J."/>
            <person name="Hofle M."/>
            <person name="Tiedje J."/>
            <person name="Richardson P."/>
        </authorList>
    </citation>
    <scope>NUCLEOTIDE SEQUENCE [LARGE SCALE GENOMIC DNA]</scope>
    <source>
        <strain>OS195</strain>
    </source>
</reference>
<accession>A9L5Z1</accession>
<protein>
    <recommendedName>
        <fullName evidence="1">DNA ligase</fullName>
        <ecNumber evidence="1">6.5.1.2</ecNumber>
    </recommendedName>
    <alternativeName>
        <fullName evidence="1">Polydeoxyribonucleotide synthase [NAD(+)]</fullName>
    </alternativeName>
</protein>
<gene>
    <name evidence="1" type="primary">ligA</name>
    <name type="ordered locus">Sbal195_2758</name>
</gene>
<comment type="function">
    <text evidence="1">DNA ligase that catalyzes the formation of phosphodiester linkages between 5'-phosphoryl and 3'-hydroxyl groups in double-stranded DNA using NAD as a coenzyme and as the energy source for the reaction. It is essential for DNA replication and repair of damaged DNA.</text>
</comment>
<comment type="catalytic activity">
    <reaction evidence="1">
        <text>NAD(+) + (deoxyribonucleotide)n-3'-hydroxyl + 5'-phospho-(deoxyribonucleotide)m = (deoxyribonucleotide)n+m + AMP + beta-nicotinamide D-nucleotide.</text>
        <dbReference type="EC" id="6.5.1.2"/>
    </reaction>
</comment>
<comment type="cofactor">
    <cofactor evidence="1">
        <name>Mg(2+)</name>
        <dbReference type="ChEBI" id="CHEBI:18420"/>
    </cofactor>
    <cofactor evidence="1">
        <name>Mn(2+)</name>
        <dbReference type="ChEBI" id="CHEBI:29035"/>
    </cofactor>
</comment>
<comment type="similarity">
    <text evidence="1">Belongs to the NAD-dependent DNA ligase family. LigA subfamily.</text>
</comment>
<dbReference type="EC" id="6.5.1.2" evidence="1"/>
<dbReference type="EMBL" id="CP000891">
    <property type="protein sequence ID" value="ABX49925.1"/>
    <property type="molecule type" value="Genomic_DNA"/>
</dbReference>
<dbReference type="RefSeq" id="WP_006085394.1">
    <property type="nucleotide sequence ID" value="NC_009997.1"/>
</dbReference>
<dbReference type="SMR" id="A9L5Z1"/>
<dbReference type="GeneID" id="11772854"/>
<dbReference type="KEGG" id="sbn:Sbal195_2758"/>
<dbReference type="HOGENOM" id="CLU_007764_2_1_6"/>
<dbReference type="Proteomes" id="UP000000770">
    <property type="component" value="Chromosome"/>
</dbReference>
<dbReference type="GO" id="GO:0005829">
    <property type="term" value="C:cytosol"/>
    <property type="evidence" value="ECO:0007669"/>
    <property type="project" value="TreeGrafter"/>
</dbReference>
<dbReference type="GO" id="GO:0003677">
    <property type="term" value="F:DNA binding"/>
    <property type="evidence" value="ECO:0007669"/>
    <property type="project" value="InterPro"/>
</dbReference>
<dbReference type="GO" id="GO:0003911">
    <property type="term" value="F:DNA ligase (NAD+) activity"/>
    <property type="evidence" value="ECO:0007669"/>
    <property type="project" value="UniProtKB-UniRule"/>
</dbReference>
<dbReference type="GO" id="GO:0046872">
    <property type="term" value="F:metal ion binding"/>
    <property type="evidence" value="ECO:0007669"/>
    <property type="project" value="UniProtKB-KW"/>
</dbReference>
<dbReference type="GO" id="GO:0006281">
    <property type="term" value="P:DNA repair"/>
    <property type="evidence" value="ECO:0007669"/>
    <property type="project" value="UniProtKB-KW"/>
</dbReference>
<dbReference type="GO" id="GO:0006260">
    <property type="term" value="P:DNA replication"/>
    <property type="evidence" value="ECO:0007669"/>
    <property type="project" value="UniProtKB-KW"/>
</dbReference>
<dbReference type="CDD" id="cd17748">
    <property type="entry name" value="BRCT_DNA_ligase_like"/>
    <property type="match status" value="1"/>
</dbReference>
<dbReference type="CDD" id="cd00114">
    <property type="entry name" value="LIGANc"/>
    <property type="match status" value="1"/>
</dbReference>
<dbReference type="FunFam" id="1.10.150.20:FF:000006">
    <property type="entry name" value="DNA ligase"/>
    <property type="match status" value="1"/>
</dbReference>
<dbReference type="FunFam" id="1.10.150.20:FF:000007">
    <property type="entry name" value="DNA ligase"/>
    <property type="match status" value="1"/>
</dbReference>
<dbReference type="FunFam" id="1.10.287.610:FF:000002">
    <property type="entry name" value="DNA ligase"/>
    <property type="match status" value="1"/>
</dbReference>
<dbReference type="FunFam" id="2.40.50.140:FF:000012">
    <property type="entry name" value="DNA ligase"/>
    <property type="match status" value="1"/>
</dbReference>
<dbReference type="FunFam" id="3.30.470.30:FF:000001">
    <property type="entry name" value="DNA ligase"/>
    <property type="match status" value="1"/>
</dbReference>
<dbReference type="Gene3D" id="6.20.10.30">
    <property type="match status" value="1"/>
</dbReference>
<dbReference type="Gene3D" id="1.10.150.20">
    <property type="entry name" value="5' to 3' exonuclease, C-terminal subdomain"/>
    <property type="match status" value="2"/>
</dbReference>
<dbReference type="Gene3D" id="3.40.50.10190">
    <property type="entry name" value="BRCT domain"/>
    <property type="match status" value="1"/>
</dbReference>
<dbReference type="Gene3D" id="3.30.470.30">
    <property type="entry name" value="DNA ligase/mRNA capping enzyme"/>
    <property type="match status" value="1"/>
</dbReference>
<dbReference type="Gene3D" id="1.10.287.610">
    <property type="entry name" value="Helix hairpin bin"/>
    <property type="match status" value="1"/>
</dbReference>
<dbReference type="Gene3D" id="2.40.50.140">
    <property type="entry name" value="Nucleic acid-binding proteins"/>
    <property type="match status" value="1"/>
</dbReference>
<dbReference type="HAMAP" id="MF_01588">
    <property type="entry name" value="DNA_ligase_A"/>
    <property type="match status" value="1"/>
</dbReference>
<dbReference type="InterPro" id="IPR001357">
    <property type="entry name" value="BRCT_dom"/>
</dbReference>
<dbReference type="InterPro" id="IPR036420">
    <property type="entry name" value="BRCT_dom_sf"/>
</dbReference>
<dbReference type="InterPro" id="IPR041663">
    <property type="entry name" value="DisA/LigA_HHH"/>
</dbReference>
<dbReference type="InterPro" id="IPR001679">
    <property type="entry name" value="DNA_ligase"/>
</dbReference>
<dbReference type="InterPro" id="IPR018239">
    <property type="entry name" value="DNA_ligase_AS"/>
</dbReference>
<dbReference type="InterPro" id="IPR033136">
    <property type="entry name" value="DNA_ligase_CS"/>
</dbReference>
<dbReference type="InterPro" id="IPR013839">
    <property type="entry name" value="DNAligase_adenylation"/>
</dbReference>
<dbReference type="InterPro" id="IPR013840">
    <property type="entry name" value="DNAligase_N"/>
</dbReference>
<dbReference type="InterPro" id="IPR003583">
    <property type="entry name" value="Hlx-hairpin-Hlx_DNA-bd_motif"/>
</dbReference>
<dbReference type="InterPro" id="IPR012340">
    <property type="entry name" value="NA-bd_OB-fold"/>
</dbReference>
<dbReference type="InterPro" id="IPR004150">
    <property type="entry name" value="NAD_DNA_ligase_OB"/>
</dbReference>
<dbReference type="InterPro" id="IPR010994">
    <property type="entry name" value="RuvA_2-like"/>
</dbReference>
<dbReference type="InterPro" id="IPR004149">
    <property type="entry name" value="Znf_DNAligase_C4"/>
</dbReference>
<dbReference type="NCBIfam" id="TIGR00575">
    <property type="entry name" value="dnlj"/>
    <property type="match status" value="1"/>
</dbReference>
<dbReference type="NCBIfam" id="NF005932">
    <property type="entry name" value="PRK07956.1"/>
    <property type="match status" value="1"/>
</dbReference>
<dbReference type="PANTHER" id="PTHR23389">
    <property type="entry name" value="CHROMOSOME TRANSMISSION FIDELITY FACTOR 18"/>
    <property type="match status" value="1"/>
</dbReference>
<dbReference type="PANTHER" id="PTHR23389:SF9">
    <property type="entry name" value="DNA LIGASE"/>
    <property type="match status" value="1"/>
</dbReference>
<dbReference type="Pfam" id="PF00533">
    <property type="entry name" value="BRCT"/>
    <property type="match status" value="1"/>
</dbReference>
<dbReference type="Pfam" id="PF01653">
    <property type="entry name" value="DNA_ligase_aden"/>
    <property type="match status" value="1"/>
</dbReference>
<dbReference type="Pfam" id="PF03120">
    <property type="entry name" value="DNA_ligase_OB"/>
    <property type="match status" value="1"/>
</dbReference>
<dbReference type="Pfam" id="PF03119">
    <property type="entry name" value="DNA_ligase_ZBD"/>
    <property type="match status" value="1"/>
</dbReference>
<dbReference type="Pfam" id="PF12826">
    <property type="entry name" value="HHH_2"/>
    <property type="match status" value="1"/>
</dbReference>
<dbReference type="PIRSF" id="PIRSF001604">
    <property type="entry name" value="LigA"/>
    <property type="match status" value="1"/>
</dbReference>
<dbReference type="SMART" id="SM00292">
    <property type="entry name" value="BRCT"/>
    <property type="match status" value="1"/>
</dbReference>
<dbReference type="SMART" id="SM00278">
    <property type="entry name" value="HhH1"/>
    <property type="match status" value="3"/>
</dbReference>
<dbReference type="SMART" id="SM00532">
    <property type="entry name" value="LIGANc"/>
    <property type="match status" value="1"/>
</dbReference>
<dbReference type="SUPFAM" id="SSF52113">
    <property type="entry name" value="BRCT domain"/>
    <property type="match status" value="1"/>
</dbReference>
<dbReference type="SUPFAM" id="SSF56091">
    <property type="entry name" value="DNA ligase/mRNA capping enzyme, catalytic domain"/>
    <property type="match status" value="1"/>
</dbReference>
<dbReference type="SUPFAM" id="SSF50249">
    <property type="entry name" value="Nucleic acid-binding proteins"/>
    <property type="match status" value="1"/>
</dbReference>
<dbReference type="SUPFAM" id="SSF47781">
    <property type="entry name" value="RuvA domain 2-like"/>
    <property type="match status" value="1"/>
</dbReference>
<dbReference type="PROSITE" id="PS50172">
    <property type="entry name" value="BRCT"/>
    <property type="match status" value="1"/>
</dbReference>
<dbReference type="PROSITE" id="PS01055">
    <property type="entry name" value="DNA_LIGASE_N1"/>
    <property type="match status" value="1"/>
</dbReference>
<dbReference type="PROSITE" id="PS01056">
    <property type="entry name" value="DNA_LIGASE_N2"/>
    <property type="match status" value="1"/>
</dbReference>
<organism>
    <name type="scientific">Shewanella baltica (strain OS195)</name>
    <dbReference type="NCBI Taxonomy" id="399599"/>
    <lineage>
        <taxon>Bacteria</taxon>
        <taxon>Pseudomonadati</taxon>
        <taxon>Pseudomonadota</taxon>
        <taxon>Gammaproteobacteria</taxon>
        <taxon>Alteromonadales</taxon>
        <taxon>Shewanellaceae</taxon>
        <taxon>Shewanella</taxon>
    </lineage>
</organism>
<proteinExistence type="inferred from homology"/>
<keyword id="KW-0227">DNA damage</keyword>
<keyword id="KW-0234">DNA repair</keyword>
<keyword id="KW-0235">DNA replication</keyword>
<keyword id="KW-0436">Ligase</keyword>
<keyword id="KW-0460">Magnesium</keyword>
<keyword id="KW-0464">Manganese</keyword>
<keyword id="KW-0479">Metal-binding</keyword>
<keyword id="KW-0520">NAD</keyword>
<keyword id="KW-0862">Zinc</keyword>
<name>DNLJ_SHEB9</name>
<sequence length="685" mass="74396">MQDIQLDTLLSEDVTPENASQVMQALSQSLNEHNIRYYVDDAPSITDSEYDRLMQRLLKLEALYPHLIVADSPTQRVGGLALAKFDQITHLKPMLSLDNAFDEADFSAFHKRVTDKVGEVSFCCEPKLDGLAVSILYRHGVLERAATRGDGSVGEDITENVKTIKSIPLKLRGNDFPELVEVRGEAFMPKAAFEALNDRARAKDEKLFVNPRNAAAGSLRQLDSKITAARSLAFYAYALGVVEPDSHPLAKTHFEQLQQLKSWGLPISSEIKVCAELSQVYDYYKDILTRRSDLAFEIDGVVMKVNDIAQQQRLGFVAKSPRWAIAYKFPAQEEMTLLEGVDFQVGRTGAVTPVARLKPVFVGGVTVSNATLHNADEIARLGIKVGDTVIIRRAGDVIPQIVAIVPERRPETATDIVFPHNCPVCGSLVERLEGEAVARCSGGLFCEAQRKEAIKHFASRKALDIDGMGDKVVEQLIDKELVQSPADLFKLTASMMTMLDRMGMKSATNLAAAIEAAKTTTLARFLYALGIREVGEATAANLAAHFASLDALRVATVEQLTEVEDVGAVVAQHVAHFFAQPHNLEVIDALIAAGVHWPAIEAPSADAQPLKGQTWVLTGTLNQLNRNDAKAQLQALGAKVAGSVSKNTDCLVAGEAAGSKLAKAQELGVKVMDEDELLALLAANA</sequence>
<feature type="chain" id="PRO_0000340380" description="DNA ligase">
    <location>
        <begin position="1"/>
        <end position="685"/>
    </location>
</feature>
<feature type="domain" description="BRCT" evidence="1">
    <location>
        <begin position="605"/>
        <end position="685"/>
    </location>
</feature>
<feature type="active site" description="N6-AMP-lysine intermediate" evidence="1">
    <location>
        <position position="127"/>
    </location>
</feature>
<feature type="binding site" evidence="1">
    <location>
        <begin position="47"/>
        <end position="51"/>
    </location>
    <ligand>
        <name>NAD(+)</name>
        <dbReference type="ChEBI" id="CHEBI:57540"/>
    </ligand>
</feature>
<feature type="binding site" evidence="1">
    <location>
        <begin position="96"/>
        <end position="97"/>
    </location>
    <ligand>
        <name>NAD(+)</name>
        <dbReference type="ChEBI" id="CHEBI:57540"/>
    </ligand>
</feature>
<feature type="binding site" evidence="1">
    <location>
        <position position="125"/>
    </location>
    <ligand>
        <name>NAD(+)</name>
        <dbReference type="ChEBI" id="CHEBI:57540"/>
    </ligand>
</feature>
<feature type="binding site" evidence="1">
    <location>
        <position position="148"/>
    </location>
    <ligand>
        <name>NAD(+)</name>
        <dbReference type="ChEBI" id="CHEBI:57540"/>
    </ligand>
</feature>
<feature type="binding site" evidence="1">
    <location>
        <position position="185"/>
    </location>
    <ligand>
        <name>NAD(+)</name>
        <dbReference type="ChEBI" id="CHEBI:57540"/>
    </ligand>
</feature>
<feature type="binding site" evidence="1">
    <location>
        <position position="304"/>
    </location>
    <ligand>
        <name>NAD(+)</name>
        <dbReference type="ChEBI" id="CHEBI:57540"/>
    </ligand>
</feature>
<feature type="binding site" evidence="1">
    <location>
        <position position="328"/>
    </location>
    <ligand>
        <name>NAD(+)</name>
        <dbReference type="ChEBI" id="CHEBI:57540"/>
    </ligand>
</feature>
<feature type="binding site" evidence="1">
    <location>
        <position position="422"/>
    </location>
    <ligand>
        <name>Zn(2+)</name>
        <dbReference type="ChEBI" id="CHEBI:29105"/>
    </ligand>
</feature>
<feature type="binding site" evidence="1">
    <location>
        <position position="425"/>
    </location>
    <ligand>
        <name>Zn(2+)</name>
        <dbReference type="ChEBI" id="CHEBI:29105"/>
    </ligand>
</feature>
<feature type="binding site" evidence="1">
    <location>
        <position position="440"/>
    </location>
    <ligand>
        <name>Zn(2+)</name>
        <dbReference type="ChEBI" id="CHEBI:29105"/>
    </ligand>
</feature>
<feature type="binding site" evidence="1">
    <location>
        <position position="446"/>
    </location>
    <ligand>
        <name>Zn(2+)</name>
        <dbReference type="ChEBI" id="CHEBI:29105"/>
    </ligand>
</feature>